<comment type="catalytic activity">
    <reaction evidence="1">
        <text>1-(5-phospho-beta-D-ribosyl)-5-[(5-phospho-beta-D-ribosylamino)methylideneamino]imidazole-4-carboxamide = 5-[(5-phospho-1-deoxy-D-ribulos-1-ylimino)methylamino]-1-(5-phospho-beta-D-ribosyl)imidazole-4-carboxamide</text>
        <dbReference type="Rhea" id="RHEA:15469"/>
        <dbReference type="ChEBI" id="CHEBI:58435"/>
        <dbReference type="ChEBI" id="CHEBI:58525"/>
        <dbReference type="EC" id="5.3.1.16"/>
    </reaction>
</comment>
<comment type="pathway">
    <text evidence="1">Amino-acid biosynthesis; L-histidine biosynthesis; L-histidine from 5-phospho-alpha-D-ribose 1-diphosphate: step 4/9.</text>
</comment>
<comment type="subcellular location">
    <subcellularLocation>
        <location evidence="1">Cytoplasm</location>
    </subcellularLocation>
</comment>
<comment type="similarity">
    <text evidence="1">Belongs to the HisA/HisF family.</text>
</comment>
<sequence>MIELWPAIDLIGSTSVRLTEGKYDSEEKMSRSAEESIAYYSQFECVNRIHIVDLIGAKAQHAREFDYIKSLRRLTTKDIEVGGGIRTKSQIMDYFAAGINYCIVGTKGIQDTDWLKEMAHTFPGRIYLSVDAYGEDIKVNGWEEDTELNLFSFVRRLSDIPLGGIIYTDIAKDGKMSGPNFELTGQLVKATTIPVIASGGIRHQQDIQRLASLNVHAAIIGKAAHQASFWEGLK</sequence>
<keyword id="KW-0028">Amino-acid biosynthesis</keyword>
<keyword id="KW-0963">Cytoplasm</keyword>
<keyword id="KW-0368">Histidine biosynthesis</keyword>
<keyword id="KW-0413">Isomerase</keyword>
<evidence type="ECO:0000255" key="1">
    <source>
        <dbReference type="HAMAP-Rule" id="MF_01014"/>
    </source>
</evidence>
<dbReference type="EC" id="5.3.1.16" evidence="1"/>
<dbReference type="EMBL" id="BX571857">
    <property type="protein sequence ID" value="CAG44376.1"/>
    <property type="molecule type" value="Genomic_DNA"/>
</dbReference>
<dbReference type="RefSeq" id="WP_000571736.1">
    <property type="nucleotide sequence ID" value="NC_002953.3"/>
</dbReference>
<dbReference type="SMR" id="Q6G601"/>
<dbReference type="KEGG" id="sas:SAS2559"/>
<dbReference type="HOGENOM" id="CLU_048577_1_2_9"/>
<dbReference type="UniPathway" id="UPA00031">
    <property type="reaction ID" value="UER00009"/>
</dbReference>
<dbReference type="GO" id="GO:0005737">
    <property type="term" value="C:cytoplasm"/>
    <property type="evidence" value="ECO:0007669"/>
    <property type="project" value="UniProtKB-SubCell"/>
</dbReference>
<dbReference type="GO" id="GO:0003949">
    <property type="term" value="F:1-(5-phosphoribosyl)-5-[(5-phosphoribosylamino)methylideneamino]imidazole-4-carboxamide isomerase activity"/>
    <property type="evidence" value="ECO:0007669"/>
    <property type="project" value="UniProtKB-UniRule"/>
</dbReference>
<dbReference type="GO" id="GO:0000105">
    <property type="term" value="P:L-histidine biosynthetic process"/>
    <property type="evidence" value="ECO:0007669"/>
    <property type="project" value="UniProtKB-UniRule"/>
</dbReference>
<dbReference type="GO" id="GO:0000162">
    <property type="term" value="P:L-tryptophan biosynthetic process"/>
    <property type="evidence" value="ECO:0007669"/>
    <property type="project" value="TreeGrafter"/>
</dbReference>
<dbReference type="CDD" id="cd04732">
    <property type="entry name" value="HisA"/>
    <property type="match status" value="1"/>
</dbReference>
<dbReference type="FunFam" id="3.20.20.70:FF:000213">
    <property type="entry name" value="1-(5-phosphoribosyl)-5-[(5-phosphoribosylamino)methylideneamino] imidazole-4-carboxamide isomerase"/>
    <property type="match status" value="1"/>
</dbReference>
<dbReference type="Gene3D" id="3.20.20.70">
    <property type="entry name" value="Aldolase class I"/>
    <property type="match status" value="1"/>
</dbReference>
<dbReference type="HAMAP" id="MF_01014">
    <property type="entry name" value="HisA"/>
    <property type="match status" value="1"/>
</dbReference>
<dbReference type="InterPro" id="IPR013785">
    <property type="entry name" value="Aldolase_TIM"/>
</dbReference>
<dbReference type="InterPro" id="IPR006062">
    <property type="entry name" value="His_biosynth"/>
</dbReference>
<dbReference type="InterPro" id="IPR006063">
    <property type="entry name" value="HisA_bact_arch"/>
</dbReference>
<dbReference type="InterPro" id="IPR044524">
    <property type="entry name" value="Isoase_HisA-like"/>
</dbReference>
<dbReference type="InterPro" id="IPR023016">
    <property type="entry name" value="Isoase_HisA-like_bact"/>
</dbReference>
<dbReference type="InterPro" id="IPR011060">
    <property type="entry name" value="RibuloseP-bd_barrel"/>
</dbReference>
<dbReference type="NCBIfam" id="TIGR00007">
    <property type="entry name" value="1-(5-phosphoribosyl)-5-[(5-phosphoribosylamino)methylideneamino]imidazole-4-carboxamide isomerase"/>
    <property type="match status" value="1"/>
</dbReference>
<dbReference type="NCBIfam" id="NF010114">
    <property type="entry name" value="PRK13587.1"/>
    <property type="match status" value="1"/>
</dbReference>
<dbReference type="PANTHER" id="PTHR43090">
    <property type="entry name" value="1-(5-PHOSPHORIBOSYL)-5-[(5-PHOSPHORIBOSYLAMINO)METHYLIDENEAMINO] IMIDAZOLE-4-CARBOXAMIDE ISOMERASE"/>
    <property type="match status" value="1"/>
</dbReference>
<dbReference type="PANTHER" id="PTHR43090:SF2">
    <property type="entry name" value="1-(5-PHOSPHORIBOSYL)-5-[(5-PHOSPHORIBOSYLAMINO)METHYLIDENEAMINO] IMIDAZOLE-4-CARBOXAMIDE ISOMERASE"/>
    <property type="match status" value="1"/>
</dbReference>
<dbReference type="Pfam" id="PF00977">
    <property type="entry name" value="His_biosynth"/>
    <property type="match status" value="1"/>
</dbReference>
<dbReference type="SUPFAM" id="SSF51366">
    <property type="entry name" value="Ribulose-phoshate binding barrel"/>
    <property type="match status" value="1"/>
</dbReference>
<protein>
    <recommendedName>
        <fullName evidence="1">1-(5-phosphoribosyl)-5-[(5-phosphoribosylamino)methylideneamino] imidazole-4-carboxamide isomerase</fullName>
        <ecNumber evidence="1">5.3.1.16</ecNumber>
    </recommendedName>
    <alternativeName>
        <fullName evidence="1">Phosphoribosylformimino-5-aminoimidazole carboxamide ribotide isomerase</fullName>
    </alternativeName>
</protein>
<gene>
    <name evidence="1" type="primary">hisA</name>
    <name type="ordered locus">SAS2559</name>
</gene>
<feature type="chain" id="PRO_0000142056" description="1-(5-phosphoribosyl)-5-[(5-phosphoribosylamino)methylideneamino] imidazole-4-carboxamide isomerase">
    <location>
        <begin position="1"/>
        <end position="234"/>
    </location>
</feature>
<feature type="active site" description="Proton acceptor" evidence="1">
    <location>
        <position position="9"/>
    </location>
</feature>
<feature type="active site" description="Proton donor" evidence="1">
    <location>
        <position position="131"/>
    </location>
</feature>
<accession>Q6G601</accession>
<proteinExistence type="inferred from homology"/>
<reference key="1">
    <citation type="journal article" date="2004" name="Proc. Natl. Acad. Sci. U.S.A.">
        <title>Complete genomes of two clinical Staphylococcus aureus strains: evidence for the rapid evolution of virulence and drug resistance.</title>
        <authorList>
            <person name="Holden M.T.G."/>
            <person name="Feil E.J."/>
            <person name="Lindsay J.A."/>
            <person name="Peacock S.J."/>
            <person name="Day N.P.J."/>
            <person name="Enright M.C."/>
            <person name="Foster T.J."/>
            <person name="Moore C.E."/>
            <person name="Hurst L."/>
            <person name="Atkin R."/>
            <person name="Barron A."/>
            <person name="Bason N."/>
            <person name="Bentley S.D."/>
            <person name="Chillingworth C."/>
            <person name="Chillingworth T."/>
            <person name="Churcher C."/>
            <person name="Clark L."/>
            <person name="Corton C."/>
            <person name="Cronin A."/>
            <person name="Doggett J."/>
            <person name="Dowd L."/>
            <person name="Feltwell T."/>
            <person name="Hance Z."/>
            <person name="Harris B."/>
            <person name="Hauser H."/>
            <person name="Holroyd S."/>
            <person name="Jagels K."/>
            <person name="James K.D."/>
            <person name="Lennard N."/>
            <person name="Line A."/>
            <person name="Mayes R."/>
            <person name="Moule S."/>
            <person name="Mungall K."/>
            <person name="Ormond D."/>
            <person name="Quail M.A."/>
            <person name="Rabbinowitsch E."/>
            <person name="Rutherford K.M."/>
            <person name="Sanders M."/>
            <person name="Sharp S."/>
            <person name="Simmonds M."/>
            <person name="Stevens K."/>
            <person name="Whitehead S."/>
            <person name="Barrell B.G."/>
            <person name="Spratt B.G."/>
            <person name="Parkhill J."/>
        </authorList>
    </citation>
    <scope>NUCLEOTIDE SEQUENCE [LARGE SCALE GENOMIC DNA]</scope>
    <source>
        <strain>MSSA476</strain>
    </source>
</reference>
<organism>
    <name type="scientific">Staphylococcus aureus (strain MSSA476)</name>
    <dbReference type="NCBI Taxonomy" id="282459"/>
    <lineage>
        <taxon>Bacteria</taxon>
        <taxon>Bacillati</taxon>
        <taxon>Bacillota</taxon>
        <taxon>Bacilli</taxon>
        <taxon>Bacillales</taxon>
        <taxon>Staphylococcaceae</taxon>
        <taxon>Staphylococcus</taxon>
    </lineage>
</organism>
<name>HIS4_STAAS</name>